<protein>
    <recommendedName>
        <fullName evidence="1">Transcription antitermination protein NusB</fullName>
    </recommendedName>
    <alternativeName>
        <fullName evidence="1">Antitermination factor NusB</fullName>
    </alternativeName>
</protein>
<name>NUSB_CLOPS</name>
<gene>
    <name evidence="1" type="primary">nusB</name>
    <name type="ordered locus">CPR_1792</name>
</gene>
<organism>
    <name type="scientific">Clostridium perfringens (strain SM101 / Type A)</name>
    <dbReference type="NCBI Taxonomy" id="289380"/>
    <lineage>
        <taxon>Bacteria</taxon>
        <taxon>Bacillati</taxon>
        <taxon>Bacillota</taxon>
        <taxon>Clostridia</taxon>
        <taxon>Eubacteriales</taxon>
        <taxon>Clostridiaceae</taxon>
        <taxon>Clostridium</taxon>
    </lineage>
</organism>
<comment type="function">
    <text evidence="1">Involved in transcription antitermination. Required for transcription of ribosomal RNA (rRNA) genes. Binds specifically to the boxA antiterminator sequence of the ribosomal RNA (rrn) operons.</text>
</comment>
<comment type="similarity">
    <text evidence="1">Belongs to the NusB family.</text>
</comment>
<dbReference type="EMBL" id="CP000312">
    <property type="protein sequence ID" value="ABG86942.1"/>
    <property type="molecule type" value="Genomic_DNA"/>
</dbReference>
<dbReference type="RefSeq" id="WP_011592693.1">
    <property type="nucleotide sequence ID" value="NC_008262.1"/>
</dbReference>
<dbReference type="SMR" id="Q0SS00"/>
<dbReference type="KEGG" id="cpr:CPR_1792"/>
<dbReference type="Proteomes" id="UP000001824">
    <property type="component" value="Chromosome"/>
</dbReference>
<dbReference type="GO" id="GO:0005829">
    <property type="term" value="C:cytosol"/>
    <property type="evidence" value="ECO:0007669"/>
    <property type="project" value="TreeGrafter"/>
</dbReference>
<dbReference type="GO" id="GO:0003723">
    <property type="term" value="F:RNA binding"/>
    <property type="evidence" value="ECO:0007669"/>
    <property type="project" value="UniProtKB-UniRule"/>
</dbReference>
<dbReference type="GO" id="GO:0006353">
    <property type="term" value="P:DNA-templated transcription termination"/>
    <property type="evidence" value="ECO:0007669"/>
    <property type="project" value="UniProtKB-UniRule"/>
</dbReference>
<dbReference type="GO" id="GO:0031564">
    <property type="term" value="P:transcription antitermination"/>
    <property type="evidence" value="ECO:0007669"/>
    <property type="project" value="UniProtKB-KW"/>
</dbReference>
<dbReference type="Gene3D" id="1.10.940.10">
    <property type="entry name" value="NusB-like"/>
    <property type="match status" value="1"/>
</dbReference>
<dbReference type="HAMAP" id="MF_00073">
    <property type="entry name" value="NusB"/>
    <property type="match status" value="1"/>
</dbReference>
<dbReference type="InterPro" id="IPR035926">
    <property type="entry name" value="NusB-like_sf"/>
</dbReference>
<dbReference type="InterPro" id="IPR011605">
    <property type="entry name" value="NusB_fam"/>
</dbReference>
<dbReference type="InterPro" id="IPR006027">
    <property type="entry name" value="NusB_RsmB_TIM44"/>
</dbReference>
<dbReference type="NCBIfam" id="TIGR01951">
    <property type="entry name" value="nusB"/>
    <property type="match status" value="1"/>
</dbReference>
<dbReference type="PANTHER" id="PTHR11078:SF3">
    <property type="entry name" value="ANTITERMINATION NUSB DOMAIN-CONTAINING PROTEIN"/>
    <property type="match status" value="1"/>
</dbReference>
<dbReference type="PANTHER" id="PTHR11078">
    <property type="entry name" value="N UTILIZATION SUBSTANCE PROTEIN B-RELATED"/>
    <property type="match status" value="1"/>
</dbReference>
<dbReference type="Pfam" id="PF01029">
    <property type="entry name" value="NusB"/>
    <property type="match status" value="1"/>
</dbReference>
<dbReference type="SUPFAM" id="SSF48013">
    <property type="entry name" value="NusB-like"/>
    <property type="match status" value="1"/>
</dbReference>
<feature type="chain" id="PRO_0000265507" description="Transcription antitermination protein NusB">
    <location>
        <begin position="1"/>
        <end position="135"/>
    </location>
</feature>
<keyword id="KW-0694">RNA-binding</keyword>
<keyword id="KW-0804">Transcription</keyword>
<keyword id="KW-0889">Transcription antitermination</keyword>
<keyword id="KW-0805">Transcription regulation</keyword>
<sequence>MNRVKSREYLLQLAYQMEITSETALETFNSFMENEDISKDDLDLAYIKSGLLGIEENKEKLDSLIESQLVKWKLNRISKVNLSILRISTYEILFAEDVPGKVSINEAIELCKKYSDNKSVSFINGVLDKVYKNIK</sequence>
<accession>Q0SS00</accession>
<evidence type="ECO:0000255" key="1">
    <source>
        <dbReference type="HAMAP-Rule" id="MF_00073"/>
    </source>
</evidence>
<reference key="1">
    <citation type="journal article" date="2006" name="Genome Res.">
        <title>Skewed genomic variability in strains of the toxigenic bacterial pathogen, Clostridium perfringens.</title>
        <authorList>
            <person name="Myers G.S.A."/>
            <person name="Rasko D.A."/>
            <person name="Cheung J.K."/>
            <person name="Ravel J."/>
            <person name="Seshadri R."/>
            <person name="DeBoy R.T."/>
            <person name="Ren Q."/>
            <person name="Varga J."/>
            <person name="Awad M.M."/>
            <person name="Brinkac L.M."/>
            <person name="Daugherty S.C."/>
            <person name="Haft D.H."/>
            <person name="Dodson R.J."/>
            <person name="Madupu R."/>
            <person name="Nelson W.C."/>
            <person name="Rosovitz M.J."/>
            <person name="Sullivan S.A."/>
            <person name="Khouri H."/>
            <person name="Dimitrov G.I."/>
            <person name="Watkins K.L."/>
            <person name="Mulligan S."/>
            <person name="Benton J."/>
            <person name="Radune D."/>
            <person name="Fisher D.J."/>
            <person name="Atkins H.S."/>
            <person name="Hiscox T."/>
            <person name="Jost B.H."/>
            <person name="Billington S.J."/>
            <person name="Songer J.G."/>
            <person name="McClane B.A."/>
            <person name="Titball R.W."/>
            <person name="Rood J.I."/>
            <person name="Melville S.B."/>
            <person name="Paulsen I.T."/>
        </authorList>
    </citation>
    <scope>NUCLEOTIDE SEQUENCE [LARGE SCALE GENOMIC DNA]</scope>
    <source>
        <strain>SM101 / Type A</strain>
    </source>
</reference>
<proteinExistence type="inferred from homology"/>